<name>MURE_STRA3</name>
<dbReference type="EC" id="6.3.2.7" evidence="1"/>
<dbReference type="EMBL" id="AL766850">
    <property type="protein sequence ID" value="CAD47120.1"/>
    <property type="molecule type" value="Genomic_DNA"/>
</dbReference>
<dbReference type="RefSeq" id="WP_000628273.1">
    <property type="nucleotide sequence ID" value="NC_004368.1"/>
</dbReference>
<dbReference type="SMR" id="Q8E4E0"/>
<dbReference type="KEGG" id="san:gbs1461"/>
<dbReference type="eggNOG" id="COG0769">
    <property type="taxonomic scope" value="Bacteria"/>
</dbReference>
<dbReference type="HOGENOM" id="CLU_022291_4_2_9"/>
<dbReference type="UniPathway" id="UPA00219"/>
<dbReference type="Proteomes" id="UP000000823">
    <property type="component" value="Chromosome"/>
</dbReference>
<dbReference type="GO" id="GO:0005737">
    <property type="term" value="C:cytoplasm"/>
    <property type="evidence" value="ECO:0007669"/>
    <property type="project" value="UniProtKB-SubCell"/>
</dbReference>
<dbReference type="GO" id="GO:0005524">
    <property type="term" value="F:ATP binding"/>
    <property type="evidence" value="ECO:0007669"/>
    <property type="project" value="UniProtKB-UniRule"/>
</dbReference>
<dbReference type="GO" id="GO:0000287">
    <property type="term" value="F:magnesium ion binding"/>
    <property type="evidence" value="ECO:0007669"/>
    <property type="project" value="UniProtKB-UniRule"/>
</dbReference>
<dbReference type="GO" id="GO:0047482">
    <property type="term" value="F:UDP-N-acetylmuramoyl-L-alanyl-D-glutamate-L-lysine ligase activity"/>
    <property type="evidence" value="ECO:0007669"/>
    <property type="project" value="UniProtKB-UniRule"/>
</dbReference>
<dbReference type="GO" id="GO:0051301">
    <property type="term" value="P:cell division"/>
    <property type="evidence" value="ECO:0007669"/>
    <property type="project" value="UniProtKB-KW"/>
</dbReference>
<dbReference type="GO" id="GO:0071555">
    <property type="term" value="P:cell wall organization"/>
    <property type="evidence" value="ECO:0007669"/>
    <property type="project" value="UniProtKB-KW"/>
</dbReference>
<dbReference type="GO" id="GO:0009252">
    <property type="term" value="P:peptidoglycan biosynthetic process"/>
    <property type="evidence" value="ECO:0007669"/>
    <property type="project" value="UniProtKB-UniRule"/>
</dbReference>
<dbReference type="GO" id="GO:0008360">
    <property type="term" value="P:regulation of cell shape"/>
    <property type="evidence" value="ECO:0007669"/>
    <property type="project" value="UniProtKB-KW"/>
</dbReference>
<dbReference type="Gene3D" id="3.90.190.20">
    <property type="entry name" value="Mur ligase, C-terminal domain"/>
    <property type="match status" value="1"/>
</dbReference>
<dbReference type="Gene3D" id="3.40.1190.10">
    <property type="entry name" value="Mur-like, catalytic domain"/>
    <property type="match status" value="1"/>
</dbReference>
<dbReference type="Gene3D" id="3.40.1390.10">
    <property type="entry name" value="MurE/MurF, N-terminal domain"/>
    <property type="match status" value="1"/>
</dbReference>
<dbReference type="HAMAP" id="MF_00208">
    <property type="entry name" value="MurE"/>
    <property type="match status" value="1"/>
</dbReference>
<dbReference type="InterPro" id="IPR036565">
    <property type="entry name" value="Mur-like_cat_sf"/>
</dbReference>
<dbReference type="InterPro" id="IPR004101">
    <property type="entry name" value="Mur_ligase_C"/>
</dbReference>
<dbReference type="InterPro" id="IPR036615">
    <property type="entry name" value="Mur_ligase_C_dom_sf"/>
</dbReference>
<dbReference type="InterPro" id="IPR013221">
    <property type="entry name" value="Mur_ligase_cen"/>
</dbReference>
<dbReference type="InterPro" id="IPR035911">
    <property type="entry name" value="MurE/MurF_N"/>
</dbReference>
<dbReference type="InterPro" id="IPR005761">
    <property type="entry name" value="UDP-N-AcMur-Glu-dNH2Pim_ligase"/>
</dbReference>
<dbReference type="NCBIfam" id="TIGR01085">
    <property type="entry name" value="murE"/>
    <property type="match status" value="1"/>
</dbReference>
<dbReference type="NCBIfam" id="NF010628">
    <property type="entry name" value="PRK14022.1"/>
    <property type="match status" value="1"/>
</dbReference>
<dbReference type="PANTHER" id="PTHR23135">
    <property type="entry name" value="MUR LIGASE FAMILY MEMBER"/>
    <property type="match status" value="1"/>
</dbReference>
<dbReference type="PANTHER" id="PTHR23135:SF4">
    <property type="entry name" value="UDP-N-ACETYLMURAMOYL-L-ALANYL-D-GLUTAMATE--2,6-DIAMINOPIMELATE LIGASE MURE HOMOLOG, CHLOROPLASTIC"/>
    <property type="match status" value="1"/>
</dbReference>
<dbReference type="Pfam" id="PF02875">
    <property type="entry name" value="Mur_ligase_C"/>
    <property type="match status" value="1"/>
</dbReference>
<dbReference type="Pfam" id="PF08245">
    <property type="entry name" value="Mur_ligase_M"/>
    <property type="match status" value="1"/>
</dbReference>
<dbReference type="SUPFAM" id="SSF53623">
    <property type="entry name" value="MurD-like peptide ligases, catalytic domain"/>
    <property type="match status" value="1"/>
</dbReference>
<dbReference type="SUPFAM" id="SSF53244">
    <property type="entry name" value="MurD-like peptide ligases, peptide-binding domain"/>
    <property type="match status" value="1"/>
</dbReference>
<dbReference type="SUPFAM" id="SSF63418">
    <property type="entry name" value="MurE/MurF N-terminal domain"/>
    <property type="match status" value="1"/>
</dbReference>
<accession>Q8E4E0</accession>
<feature type="chain" id="PRO_0000101948" description="UDP-N-acetylmuramoyl-L-alanyl-D-glutamate--L-lysine ligase">
    <location>
        <begin position="1"/>
        <end position="484"/>
    </location>
</feature>
<feature type="short sequence motif" description="L-lysine recognition motif">
    <location>
        <begin position="405"/>
        <end position="408"/>
    </location>
</feature>
<feature type="binding site" evidence="1">
    <location>
        <position position="43"/>
    </location>
    <ligand>
        <name>UDP-N-acetyl-alpha-D-muramoyl-L-alanyl-D-glutamate</name>
        <dbReference type="ChEBI" id="CHEBI:83900"/>
    </ligand>
</feature>
<feature type="binding site" evidence="1">
    <location>
        <begin position="119"/>
        <end position="125"/>
    </location>
    <ligand>
        <name>ATP</name>
        <dbReference type="ChEBI" id="CHEBI:30616"/>
    </ligand>
</feature>
<feature type="binding site" evidence="1">
    <location>
        <begin position="161"/>
        <end position="162"/>
    </location>
    <ligand>
        <name>UDP-N-acetyl-alpha-D-muramoyl-L-alanyl-D-glutamate</name>
        <dbReference type="ChEBI" id="CHEBI:83900"/>
    </ligand>
</feature>
<feature type="binding site" evidence="1">
    <location>
        <position position="188"/>
    </location>
    <ligand>
        <name>UDP-N-acetyl-alpha-D-muramoyl-L-alanyl-D-glutamate</name>
        <dbReference type="ChEBI" id="CHEBI:83900"/>
    </ligand>
</feature>
<feature type="binding site" evidence="1">
    <location>
        <position position="196"/>
    </location>
    <ligand>
        <name>UDP-N-acetyl-alpha-D-muramoyl-L-alanyl-D-glutamate</name>
        <dbReference type="ChEBI" id="CHEBI:83900"/>
    </ligand>
</feature>
<feature type="modified residue" description="N6-carboxylysine" evidence="1">
    <location>
        <position position="230"/>
    </location>
</feature>
<evidence type="ECO:0000255" key="1">
    <source>
        <dbReference type="HAMAP-Rule" id="MF_00208"/>
    </source>
</evidence>
<comment type="function">
    <text evidence="1">Catalyzes the addition of L-lysine to the nucleotide precursor UDP-N-acetylmuramoyl-L-alanyl-D-glutamate (UMAG) in the biosynthesis of bacterial cell-wall peptidoglycan.</text>
</comment>
<comment type="catalytic activity">
    <reaction evidence="1">
        <text>UDP-N-acetyl-alpha-D-muramoyl-L-alanyl-D-glutamate + L-lysine + ATP = UDP-N-acetyl-alpha-D-muramoyl-L-alanyl-gamma-D-glutamyl-L-lysine + ADP + phosphate + H(+)</text>
        <dbReference type="Rhea" id="RHEA:17969"/>
        <dbReference type="ChEBI" id="CHEBI:15378"/>
        <dbReference type="ChEBI" id="CHEBI:30616"/>
        <dbReference type="ChEBI" id="CHEBI:32551"/>
        <dbReference type="ChEBI" id="CHEBI:43474"/>
        <dbReference type="ChEBI" id="CHEBI:83900"/>
        <dbReference type="ChEBI" id="CHEBI:83903"/>
        <dbReference type="ChEBI" id="CHEBI:456216"/>
        <dbReference type="EC" id="6.3.2.7"/>
    </reaction>
</comment>
<comment type="pathway">
    <text evidence="1">Cell wall biogenesis; peptidoglycan biosynthesis.</text>
</comment>
<comment type="subcellular location">
    <subcellularLocation>
        <location evidence="1">Cytoplasm</location>
    </subcellularLocation>
</comment>
<comment type="PTM">
    <text evidence="1">Carboxylation is probably crucial for Mg(2+) binding and, consequently, for the gamma-phosphate positioning of ATP.</text>
</comment>
<comment type="similarity">
    <text evidence="1">Belongs to the MurCDEF family. MurE subfamily.</text>
</comment>
<protein>
    <recommendedName>
        <fullName evidence="1">UDP-N-acetylmuramoyl-L-alanyl-D-glutamate--L-lysine ligase</fullName>
        <ecNumber evidence="1">6.3.2.7</ecNumber>
    </recommendedName>
    <alternativeName>
        <fullName evidence="1">L-lysine-adding enzyme</fullName>
    </alternativeName>
    <alternativeName>
        <fullName evidence="1">UDP-MurNAc-L-Ala-D-Glu:L-Lys ligase</fullName>
    </alternativeName>
    <alternativeName>
        <fullName evidence="1">UDP-MurNAc-tripeptide synthetase</fullName>
    </alternativeName>
    <alternativeName>
        <fullName evidence="1">UDP-N-acetylmuramyl-tripeptide synthetase</fullName>
    </alternativeName>
</protein>
<reference key="1">
    <citation type="journal article" date="2002" name="Mol. Microbiol.">
        <title>Genome sequence of Streptococcus agalactiae, a pathogen causing invasive neonatal disease.</title>
        <authorList>
            <person name="Glaser P."/>
            <person name="Rusniok C."/>
            <person name="Buchrieser C."/>
            <person name="Chevalier F."/>
            <person name="Frangeul L."/>
            <person name="Msadek T."/>
            <person name="Zouine M."/>
            <person name="Couve E."/>
            <person name="Lalioui L."/>
            <person name="Poyart C."/>
            <person name="Trieu-Cuot P."/>
            <person name="Kunst F."/>
        </authorList>
    </citation>
    <scope>NUCLEOTIDE SEQUENCE [LARGE SCALE GENOMIC DNA]</scope>
    <source>
        <strain>NEM316</strain>
    </source>
</reference>
<proteinExistence type="inferred from homology"/>
<organism>
    <name type="scientific">Streptococcus agalactiae serotype III (strain NEM316)</name>
    <dbReference type="NCBI Taxonomy" id="211110"/>
    <lineage>
        <taxon>Bacteria</taxon>
        <taxon>Bacillati</taxon>
        <taxon>Bacillota</taxon>
        <taxon>Bacilli</taxon>
        <taxon>Lactobacillales</taxon>
        <taxon>Streptococcaceae</taxon>
        <taxon>Streptococcus</taxon>
    </lineage>
</organism>
<gene>
    <name evidence="1" type="primary">murE</name>
    <name type="ordered locus">gbs1461</name>
</gene>
<sequence>MITIDKILEILKNDHNFREILFHEHYYYNWTQNVTFNALSYDSRQISSDTLFFAKGATFKKEYLDSAITAGLSFYVSEIDYGADIPVILVNDIKKAMSLISMSFYNNPQNKLKLLAFTGTKGKTTAAYFAYHMLKVNHRPAMLSTMNTTLDGKSFFKSHLTTPESLDLFRMMATAVENQMTHLVMEVSSQAYLTKRVYGLTFDVGVFLNISPDHIGPIEHPTFEDYFFHKRLLMENSNAVVVNSQMDHFNIVKEQVEYIPHDFYGDYSENVITESQAFSFHVKGKLENTYDIKLIGKFNQENAIAAGLACLRLGVSIEDIKNGIAQTTVPGRMEVLTQTNGAKIFVDYAHNGDSLKKLLAVVEEHQKGDIILVLGAPGNKGQSRRKDFGDVINQHPNLQVILTADDPNFEDPLVISQEIASHINRPVTIIIDREEAIANASTLTNCKLDAIIIAGKGADAYQIIKGNRDNYSGDLEVAKKYLKR</sequence>
<keyword id="KW-0067">ATP-binding</keyword>
<keyword id="KW-0131">Cell cycle</keyword>
<keyword id="KW-0132">Cell division</keyword>
<keyword id="KW-0133">Cell shape</keyword>
<keyword id="KW-0961">Cell wall biogenesis/degradation</keyword>
<keyword id="KW-0963">Cytoplasm</keyword>
<keyword id="KW-0436">Ligase</keyword>
<keyword id="KW-0547">Nucleotide-binding</keyword>
<keyword id="KW-0573">Peptidoglycan synthesis</keyword>